<sequence length="45" mass="5510">MRIKIEDRKTKRLNFLNSWKPLRLEGRLAAEDIEKLRLLKYENLP</sequence>
<keyword id="KW-1185">Reference proteome</keyword>
<gene>
    <name type="ordered locus">AF_1078</name>
</gene>
<protein>
    <recommendedName>
        <fullName>Uncharacterized protein AF_1078</fullName>
    </recommendedName>
</protein>
<feature type="chain" id="PRO_0000127959" description="Uncharacterized protein AF_1078">
    <location>
        <begin position="1"/>
        <end position="45"/>
    </location>
</feature>
<name>Y1078_ARCFU</name>
<organism>
    <name type="scientific">Archaeoglobus fulgidus (strain ATCC 49558 / DSM 4304 / JCM 9628 / NBRC 100126 / VC-16)</name>
    <dbReference type="NCBI Taxonomy" id="224325"/>
    <lineage>
        <taxon>Archaea</taxon>
        <taxon>Methanobacteriati</taxon>
        <taxon>Methanobacteriota</taxon>
        <taxon>Archaeoglobi</taxon>
        <taxon>Archaeoglobales</taxon>
        <taxon>Archaeoglobaceae</taxon>
        <taxon>Archaeoglobus</taxon>
    </lineage>
</organism>
<dbReference type="EMBL" id="AE000782">
    <property type="protein sequence ID" value="AAB90169.1"/>
    <property type="molecule type" value="Genomic_DNA"/>
</dbReference>
<dbReference type="PIR" id="F69384">
    <property type="entry name" value="F69384"/>
</dbReference>
<dbReference type="RefSeq" id="WP_010878577.1">
    <property type="nucleotide sequence ID" value="NC_000917.1"/>
</dbReference>
<dbReference type="STRING" id="224325.AF_1078"/>
<dbReference type="PaxDb" id="224325-AF_1078"/>
<dbReference type="EnsemblBacteria" id="AAB90169">
    <property type="protein sequence ID" value="AAB90169"/>
    <property type="gene ID" value="AF_1078"/>
</dbReference>
<dbReference type="GeneID" id="63606522"/>
<dbReference type="KEGG" id="afu:AF_1078"/>
<dbReference type="HOGENOM" id="CLU_3194311_0_0_2"/>
<dbReference type="Proteomes" id="UP000002199">
    <property type="component" value="Chromosome"/>
</dbReference>
<reference key="1">
    <citation type="journal article" date="1997" name="Nature">
        <title>The complete genome sequence of the hyperthermophilic, sulphate-reducing archaeon Archaeoglobus fulgidus.</title>
        <authorList>
            <person name="Klenk H.-P."/>
            <person name="Clayton R.A."/>
            <person name="Tomb J.-F."/>
            <person name="White O."/>
            <person name="Nelson K.E."/>
            <person name="Ketchum K.A."/>
            <person name="Dodson R.J."/>
            <person name="Gwinn M.L."/>
            <person name="Hickey E.K."/>
            <person name="Peterson J.D."/>
            <person name="Richardson D.L."/>
            <person name="Kerlavage A.R."/>
            <person name="Graham D.E."/>
            <person name="Kyrpides N.C."/>
            <person name="Fleischmann R.D."/>
            <person name="Quackenbush J."/>
            <person name="Lee N.H."/>
            <person name="Sutton G.G."/>
            <person name="Gill S.R."/>
            <person name="Kirkness E.F."/>
            <person name="Dougherty B.A."/>
            <person name="McKenney K."/>
            <person name="Adams M.D."/>
            <person name="Loftus B.J."/>
            <person name="Peterson S.N."/>
            <person name="Reich C.I."/>
            <person name="McNeil L.K."/>
            <person name="Badger J.H."/>
            <person name="Glodek A."/>
            <person name="Zhou L."/>
            <person name="Overbeek R."/>
            <person name="Gocayne J.D."/>
            <person name="Weidman J.F."/>
            <person name="McDonald L.A."/>
            <person name="Utterback T.R."/>
            <person name="Cotton M.D."/>
            <person name="Spriggs T."/>
            <person name="Artiach P."/>
            <person name="Kaine B.P."/>
            <person name="Sykes S.M."/>
            <person name="Sadow P.W."/>
            <person name="D'Andrea K.P."/>
            <person name="Bowman C."/>
            <person name="Fujii C."/>
            <person name="Garland S.A."/>
            <person name="Mason T.M."/>
            <person name="Olsen G.J."/>
            <person name="Fraser C.M."/>
            <person name="Smith H.O."/>
            <person name="Woese C.R."/>
            <person name="Venter J.C."/>
        </authorList>
    </citation>
    <scope>NUCLEOTIDE SEQUENCE [LARGE SCALE GENOMIC DNA]</scope>
    <source>
        <strain>ATCC 49558 / DSM 4304 / JCM 9628 / NBRC 100126 / VC-16</strain>
    </source>
</reference>
<accession>O29185</accession>
<proteinExistence type="predicted"/>